<organism>
    <name type="scientific">Emericella nidulans (strain FGSC A4 / ATCC 38163 / CBS 112.46 / NRRL 194 / M139)</name>
    <name type="common">Aspergillus nidulans</name>
    <dbReference type="NCBI Taxonomy" id="227321"/>
    <lineage>
        <taxon>Eukaryota</taxon>
        <taxon>Fungi</taxon>
        <taxon>Dikarya</taxon>
        <taxon>Ascomycota</taxon>
        <taxon>Pezizomycotina</taxon>
        <taxon>Eurotiomycetes</taxon>
        <taxon>Eurotiomycetidae</taxon>
        <taxon>Eurotiales</taxon>
        <taxon>Aspergillaceae</taxon>
        <taxon>Aspergillus</taxon>
        <taxon>Aspergillus subgen. Nidulantes</taxon>
    </lineage>
</organism>
<sequence>MTARGKNVKIQTLATENEIFLYDRRYVSEQDNADLPKLPSPQPLVLDKPPDTLSDRNDLQAWRNLYAARKTWAAELTERCEMADTSIRELNERTGIVNRAASVALENLKTHVAALENRFQEAQAWAKELSREQKSALEEWKRALANLENIPARKEFSFLGRPSTPKKDADRATGTLLDYVDAVEVQKAGPEASAASSRFAQQIQDIERAVGEITAGTQRLLDDVPNSRTDTADGLLQEIEPLSRKIQSDYEHVLGLSNNSKTLANISRLALNHTQDILPSMLEIAMEIRESLAAAVRQYDAATKSALGRTKLISAIQSRLADVQAHIANLTFQSDAFDLLYSVFHMPLVYGSVLIESVRRHEFNEKMKSDSLTLAEELSIFQDEEQRRRKKWVKNMEDFLSVTDTTTPGIEVNLRGHEFDWPIVTRKDIETYIEDLRSNPGTANAAQELAQAFKELDAPTRVQRRRAKAFKQGSIFDLSRSSLLLHSDEIVRSLRDEKLKLEEKLRGSESRIRKLEDLLHRHSHLGRPSSGNFSIDFPASPASPHPDPMSRRSSVSSRRLSSNQTSEEKNLVNRIVHLEADLAIERETVQRLQREADAERQSNTNKMQEAQSTKNDLIGNLEARQREFSDERRYLEGEVKRFKIRVEELEEELDRLTDSRDHEKQDADERMHQLELELQDAHARADAEMRKANNLLEQMQSHREAADRSKLRMDELEKQATERTQKDQEVRHALQAAFMNLSPGGSVPDEIVDIIKAIDVLSEGLTIHAKTAEDNAMKAAAENKTLIEQLEKMESNYENAKSASEQYQTQLTQAREEVEQEQSKVKAIESELNDERASLLELESKLAAGETGAGALREHVAEEEQKLNNMSQQLAETEARARRSEEEALQWRKRAEALSESDKQVAARIDIRTARLEELSRQLFGQVEKLERMLEQLGFTVIRQDGEIVVQRSSKVNALSATADTLSQSGVVSVKPDPSLLNWMQGEHPEEETERFNAFLESLHQFSVDIFGDAVVKRVKDIEVLARKWQKEARGYRDKYHRMQSEAHDKIAYRSFKEGDLALFLPTRNQAIRSWAAFNVGAPHYFLREQDVHKLQARDWLLARITKIEERVVDLSKSMNGGNPDRRSIGEASDGASIDDENPFELSDGLRWYLLDATEEKPGAPATPGLGKSTVAPAHVDAKGSIRLKRTPAGGNVTKTLTRSLDSRRNSSASASIKRGTPPSRANDSTTDLVRPAQAESESIAAATDSKSQSQSQSQERERRQEAQGTAVIFDEVRRDQLQGP</sequence>
<name>ATG11_EMENI</name>
<reference key="1">
    <citation type="journal article" date="2005" name="Nature">
        <title>Sequencing of Aspergillus nidulans and comparative analysis with A. fumigatus and A. oryzae.</title>
        <authorList>
            <person name="Galagan J.E."/>
            <person name="Calvo S.E."/>
            <person name="Cuomo C."/>
            <person name="Ma L.-J."/>
            <person name="Wortman J.R."/>
            <person name="Batzoglou S."/>
            <person name="Lee S.-I."/>
            <person name="Bastuerkmen M."/>
            <person name="Spevak C.C."/>
            <person name="Clutterbuck J."/>
            <person name="Kapitonov V."/>
            <person name="Jurka J."/>
            <person name="Scazzocchio C."/>
            <person name="Farman M.L."/>
            <person name="Butler J."/>
            <person name="Purcell S."/>
            <person name="Harris S."/>
            <person name="Braus G.H."/>
            <person name="Draht O."/>
            <person name="Busch S."/>
            <person name="D'Enfert C."/>
            <person name="Bouchier C."/>
            <person name="Goldman G.H."/>
            <person name="Bell-Pedersen D."/>
            <person name="Griffiths-Jones S."/>
            <person name="Doonan J.H."/>
            <person name="Yu J."/>
            <person name="Vienken K."/>
            <person name="Pain A."/>
            <person name="Freitag M."/>
            <person name="Selker E.U."/>
            <person name="Archer D.B."/>
            <person name="Penalva M.A."/>
            <person name="Oakley B.R."/>
            <person name="Momany M."/>
            <person name="Tanaka T."/>
            <person name="Kumagai T."/>
            <person name="Asai K."/>
            <person name="Machida M."/>
            <person name="Nierman W.C."/>
            <person name="Denning D.W."/>
            <person name="Caddick M.X."/>
            <person name="Hynes M."/>
            <person name="Paoletti M."/>
            <person name="Fischer R."/>
            <person name="Miller B.L."/>
            <person name="Dyer P.S."/>
            <person name="Sachs M.S."/>
            <person name="Osmani S.A."/>
            <person name="Birren B.W."/>
        </authorList>
    </citation>
    <scope>NUCLEOTIDE SEQUENCE [LARGE SCALE GENOMIC DNA]</scope>
    <source>
        <strain>FGSC A4 / ATCC 38163 / CBS 112.46 / NRRL 194 / M139</strain>
    </source>
</reference>
<reference key="2">
    <citation type="journal article" date="2009" name="Fungal Genet. Biol.">
        <title>The 2008 update of the Aspergillus nidulans genome annotation: a community effort.</title>
        <authorList>
            <person name="Wortman J.R."/>
            <person name="Gilsenan J.M."/>
            <person name="Joardar V."/>
            <person name="Deegan J."/>
            <person name="Clutterbuck J."/>
            <person name="Andersen M.R."/>
            <person name="Archer D."/>
            <person name="Bencina M."/>
            <person name="Braus G."/>
            <person name="Coutinho P."/>
            <person name="von Dohren H."/>
            <person name="Doonan J."/>
            <person name="Driessen A.J."/>
            <person name="Durek P."/>
            <person name="Espeso E."/>
            <person name="Fekete E."/>
            <person name="Flipphi M."/>
            <person name="Estrada C.G."/>
            <person name="Geysens S."/>
            <person name="Goldman G."/>
            <person name="de Groot P.W."/>
            <person name="Hansen K."/>
            <person name="Harris S.D."/>
            <person name="Heinekamp T."/>
            <person name="Helmstaedt K."/>
            <person name="Henrissat B."/>
            <person name="Hofmann G."/>
            <person name="Homan T."/>
            <person name="Horio T."/>
            <person name="Horiuchi H."/>
            <person name="James S."/>
            <person name="Jones M."/>
            <person name="Karaffa L."/>
            <person name="Karanyi Z."/>
            <person name="Kato M."/>
            <person name="Keller N."/>
            <person name="Kelly D.E."/>
            <person name="Kiel J.A."/>
            <person name="Kim J.M."/>
            <person name="van der Klei I.J."/>
            <person name="Klis F.M."/>
            <person name="Kovalchuk A."/>
            <person name="Krasevec N."/>
            <person name="Kubicek C.P."/>
            <person name="Liu B."/>
            <person name="Maccabe A."/>
            <person name="Meyer V."/>
            <person name="Mirabito P."/>
            <person name="Miskei M."/>
            <person name="Mos M."/>
            <person name="Mullins J."/>
            <person name="Nelson D.R."/>
            <person name="Nielsen J."/>
            <person name="Oakley B.R."/>
            <person name="Osmani S.A."/>
            <person name="Pakula T."/>
            <person name="Paszewski A."/>
            <person name="Paulsen I."/>
            <person name="Pilsyk S."/>
            <person name="Pocsi I."/>
            <person name="Punt P.J."/>
            <person name="Ram A.F."/>
            <person name="Ren Q."/>
            <person name="Robellet X."/>
            <person name="Robson G."/>
            <person name="Seiboth B."/>
            <person name="van Solingen P."/>
            <person name="Specht T."/>
            <person name="Sun J."/>
            <person name="Taheri-Talesh N."/>
            <person name="Takeshita N."/>
            <person name="Ussery D."/>
            <person name="vanKuyk P.A."/>
            <person name="Visser H."/>
            <person name="van de Vondervoort P.J."/>
            <person name="de Vries R.P."/>
            <person name="Walton J."/>
            <person name="Xiang X."/>
            <person name="Xiong Y."/>
            <person name="Zeng A.P."/>
            <person name="Brandt B.W."/>
            <person name="Cornell M.J."/>
            <person name="van den Hondel C.A."/>
            <person name="Visser J."/>
            <person name="Oliver S.G."/>
            <person name="Turner G."/>
        </authorList>
    </citation>
    <scope>GENOME REANNOTATION</scope>
    <source>
        <strain>FGSC A4 / ATCC 38163 / CBS 112.46 / NRRL 194 / M139</strain>
    </source>
</reference>
<dbReference type="EMBL" id="AACD01000051">
    <property type="protein sequence ID" value="EAA63458.1"/>
    <property type="status" value="ALT_SEQ"/>
    <property type="molecule type" value="Genomic_DNA"/>
</dbReference>
<dbReference type="EMBL" id="BN001306">
    <property type="protein sequence ID" value="CBF83808.1"/>
    <property type="status" value="ALT_SEQ"/>
    <property type="molecule type" value="Genomic_DNA"/>
</dbReference>
<dbReference type="RefSeq" id="XP_660491.1">
    <property type="nucleotide sequence ID" value="XM_655399.1"/>
</dbReference>
<dbReference type="SMR" id="Q5B993"/>
<dbReference type="STRING" id="227321.Q5B993"/>
<dbReference type="eggNOG" id="ENOG502QVZE">
    <property type="taxonomic scope" value="Eukaryota"/>
</dbReference>
<dbReference type="HOGENOM" id="CLU_002803_1_0_1"/>
<dbReference type="InParanoid" id="Q5B993"/>
<dbReference type="Proteomes" id="UP000000560">
    <property type="component" value="Chromosome VI"/>
</dbReference>
<dbReference type="GO" id="GO:1990316">
    <property type="term" value="C:Atg1/ULK1 kinase complex"/>
    <property type="evidence" value="ECO:0000318"/>
    <property type="project" value="GO_Central"/>
</dbReference>
<dbReference type="GO" id="GO:0034045">
    <property type="term" value="C:phagophore assembly site membrane"/>
    <property type="evidence" value="ECO:0000318"/>
    <property type="project" value="GO_Central"/>
</dbReference>
<dbReference type="GO" id="GO:0005774">
    <property type="term" value="C:vacuolar membrane"/>
    <property type="evidence" value="ECO:0007669"/>
    <property type="project" value="UniProtKB-SubCell"/>
</dbReference>
<dbReference type="GO" id="GO:0060090">
    <property type="term" value="F:molecular adaptor activity"/>
    <property type="evidence" value="ECO:0000318"/>
    <property type="project" value="GO_Central"/>
</dbReference>
<dbReference type="GO" id="GO:0019901">
    <property type="term" value="F:protein kinase binding"/>
    <property type="evidence" value="ECO:0000318"/>
    <property type="project" value="GO_Central"/>
</dbReference>
<dbReference type="GO" id="GO:0000045">
    <property type="term" value="P:autophagosome assembly"/>
    <property type="evidence" value="ECO:0000318"/>
    <property type="project" value="GO_Central"/>
</dbReference>
<dbReference type="GO" id="GO:0000422">
    <property type="term" value="P:autophagy of mitochondrion"/>
    <property type="evidence" value="ECO:0000318"/>
    <property type="project" value="GO_Central"/>
</dbReference>
<dbReference type="GO" id="GO:0000425">
    <property type="term" value="P:pexophagy"/>
    <property type="evidence" value="ECO:0000318"/>
    <property type="project" value="GO_Central"/>
</dbReference>
<dbReference type="GO" id="GO:0034727">
    <property type="term" value="P:piecemeal microautophagy of the nucleus"/>
    <property type="evidence" value="ECO:0000318"/>
    <property type="project" value="GO_Central"/>
</dbReference>
<dbReference type="GO" id="GO:0015031">
    <property type="term" value="P:protein transport"/>
    <property type="evidence" value="ECO:0007669"/>
    <property type="project" value="UniProtKB-KW"/>
</dbReference>
<dbReference type="GO" id="GO:0061709">
    <property type="term" value="P:reticulophagy"/>
    <property type="evidence" value="ECO:0000318"/>
    <property type="project" value="GO_Central"/>
</dbReference>
<dbReference type="GO" id="GO:0034517">
    <property type="term" value="P:ribophagy"/>
    <property type="evidence" value="ECO:0000318"/>
    <property type="project" value="GO_Central"/>
</dbReference>
<dbReference type="InterPro" id="IPR040040">
    <property type="entry name" value="ATG11"/>
</dbReference>
<dbReference type="InterPro" id="IPR019460">
    <property type="entry name" value="Atg11_C"/>
</dbReference>
<dbReference type="InterPro" id="IPR045326">
    <property type="entry name" value="ATG17-like_dom"/>
</dbReference>
<dbReference type="PANTHER" id="PTHR13222">
    <property type="entry name" value="RB1-INDUCIBLE COILED-COIL"/>
    <property type="match status" value="1"/>
</dbReference>
<dbReference type="PANTHER" id="PTHR13222:SF1">
    <property type="entry name" value="RB1-INDUCIBLE COILED-COIL PROTEIN 1"/>
    <property type="match status" value="1"/>
</dbReference>
<dbReference type="Pfam" id="PF10377">
    <property type="entry name" value="ATG11"/>
    <property type="match status" value="1"/>
</dbReference>
<dbReference type="Pfam" id="PF04108">
    <property type="entry name" value="ATG17_like"/>
    <property type="match status" value="1"/>
</dbReference>
<dbReference type="SUPFAM" id="SSF57997">
    <property type="entry name" value="Tropomyosin"/>
    <property type="match status" value="1"/>
</dbReference>
<evidence type="ECO:0000250" key="1"/>
<evidence type="ECO:0000255" key="2"/>
<evidence type="ECO:0000256" key="3">
    <source>
        <dbReference type="SAM" id="MobiDB-lite"/>
    </source>
</evidence>
<evidence type="ECO:0000305" key="4"/>
<feature type="chain" id="PRO_0000124547" description="Autophagy-related protein 11">
    <location>
        <begin position="1"/>
        <end position="1285"/>
    </location>
</feature>
<feature type="region of interest" description="Disordered" evidence="3">
    <location>
        <begin position="32"/>
        <end position="52"/>
    </location>
</feature>
<feature type="region of interest" description="Disordered" evidence="3">
    <location>
        <begin position="523"/>
        <end position="568"/>
    </location>
</feature>
<feature type="region of interest" description="Disordered" evidence="3">
    <location>
        <begin position="595"/>
        <end position="615"/>
    </location>
</feature>
<feature type="region of interest" description="Disordered" evidence="3">
    <location>
        <begin position="1116"/>
        <end position="1142"/>
    </location>
</feature>
<feature type="region of interest" description="Disordered" evidence="3">
    <location>
        <begin position="1181"/>
        <end position="1285"/>
    </location>
</feature>
<feature type="coiled-coil region" evidence="2">
    <location>
        <begin position="73"/>
        <end position="150"/>
    </location>
</feature>
<feature type="coiled-coil region" evidence="2">
    <location>
        <begin position="486"/>
        <end position="523"/>
    </location>
</feature>
<feature type="coiled-coil region" evidence="2">
    <location>
        <begin position="563"/>
        <end position="726"/>
    </location>
</feature>
<feature type="coiled-coil region" evidence="2">
    <location>
        <begin position="769"/>
        <end position="937"/>
    </location>
</feature>
<feature type="compositionally biased region" description="Low complexity" evidence="3">
    <location>
        <begin position="551"/>
        <end position="562"/>
    </location>
</feature>
<feature type="compositionally biased region" description="Polar residues" evidence="3">
    <location>
        <begin position="601"/>
        <end position="615"/>
    </location>
</feature>
<feature type="compositionally biased region" description="Polar residues" evidence="3">
    <location>
        <begin position="1197"/>
        <end position="1215"/>
    </location>
</feature>
<feature type="compositionally biased region" description="Basic and acidic residues" evidence="3">
    <location>
        <begin position="1275"/>
        <end position="1285"/>
    </location>
</feature>
<gene>
    <name type="primary">atg11</name>
    <name type="ORF">AN2887</name>
</gene>
<keyword id="KW-0072">Autophagy</keyword>
<keyword id="KW-0175">Coiled coil</keyword>
<keyword id="KW-0472">Membrane</keyword>
<keyword id="KW-0653">Protein transport</keyword>
<keyword id="KW-1185">Reference proteome</keyword>
<keyword id="KW-0813">Transport</keyword>
<keyword id="KW-0926">Vacuole</keyword>
<protein>
    <recommendedName>
        <fullName>Autophagy-related protein 11</fullName>
    </recommendedName>
</protein>
<comment type="function">
    <text evidence="1">Involved in cytoplasm to vacuole transport (Cvt), pexophagy, mitophagy and nucleophagy. Recruits mitochondria for their selective degradation via autophagy (mitophagy) during starvation. Works as scaffold proteins that recruit ATG proteins to the pre-autophagosome (PAS), the site of vesicle/autophagosome formation. Required for the Cvt vesicles completion (By similarity).</text>
</comment>
<comment type="subunit">
    <text evidence="1">Homodimer.</text>
</comment>
<comment type="subcellular location">
    <subcellularLocation>
        <location evidence="1">Preautophagosomal structure membrane</location>
        <topology evidence="1">Peripheral membrane protein</topology>
    </subcellularLocation>
    <subcellularLocation>
        <location evidence="1">Vacuole membrane</location>
        <topology evidence="1">Peripheral membrane protein</topology>
    </subcellularLocation>
    <text evidence="1">During pexophagy, accumulates in the vacuolar membrane region, where the peroxisomes contact the vacuole.</text>
</comment>
<comment type="similarity">
    <text evidence="4">Belongs to the ATG11 family.</text>
</comment>
<comment type="sequence caution" evidence="4">
    <conflict type="erroneous gene model prediction">
        <sequence resource="EMBL-CDS" id="CBF83808"/>
    </conflict>
</comment>
<comment type="sequence caution" evidence="4">
    <conflict type="erroneous gene model prediction">
        <sequence resource="EMBL-CDS" id="EAA63458"/>
    </conflict>
</comment>
<proteinExistence type="inferred from homology"/>
<accession>Q5B993</accession>
<accession>C8VJ96</accession>